<protein>
    <recommendedName>
        <fullName>U10-barytoxin-Tl1a</fullName>
        <shortName>U10-BATX-Tl1a</shortName>
    </recommendedName>
    <alternativeName>
        <fullName evidence="3">Toxin ICK-3</fullName>
    </alternativeName>
</protein>
<reference key="1">
    <citation type="journal article" date="2013" name="Toxins">
        <title>A proteomics and transcriptomics investigation of the venom from the barychelid spider Trittame loki (brush-foot trapdoor).</title>
        <authorList>
            <person name="Undheim E.A."/>
            <person name="Sunagar K."/>
            <person name="Herzig V."/>
            <person name="Kely L."/>
            <person name="Low D.H."/>
            <person name="Jackson T.N."/>
            <person name="Jones A."/>
            <person name="Kurniawan N."/>
            <person name="King G.F."/>
            <person name="Ali S.A."/>
            <person name="Antunes A."/>
            <person name="Ruder T."/>
            <person name="Fry B.G."/>
        </authorList>
    </citation>
    <scope>NUCLEOTIDE SEQUENCE [MRNA]</scope>
    <source>
        <tissue>Venom gland</tissue>
    </source>
</reference>
<comment type="function">
    <text evidence="4">Ion channel inhibitor.</text>
</comment>
<comment type="subcellular location">
    <subcellularLocation>
        <location evidence="1">Secreted</location>
    </subcellularLocation>
</comment>
<comment type="tissue specificity">
    <text>Expressed by the venom gland.</text>
</comment>
<comment type="domain">
    <text evidence="1">The presence of a 'disulfide through disulfide knot' structurally defines this protein as a knottin.</text>
</comment>
<comment type="similarity">
    <text evidence="4">Belongs to the neurotoxin 10 (Hwtx-1) family. 27 (ICK-3) subfamily.</text>
</comment>
<sequence length="98" mass="10575">MKTLVLVAVLGVASLYLLSSASEVQQLSPAEEEFRAFVSTFGGLFETEERGVDSEDCRAMFGGCGEDNDCCLHLGCKTTKLPPFANPYCAWDGTTGRK</sequence>
<proteinExistence type="evidence at transcript level"/>
<accession>W4VSI9</accession>
<feature type="signal peptide" evidence="2">
    <location>
        <begin position="1"/>
        <end position="21"/>
    </location>
</feature>
<feature type="propeptide" id="PRO_0000434823" evidence="4">
    <location>
        <begin position="22"/>
        <end position="50"/>
    </location>
</feature>
<feature type="chain" id="PRO_0000429210" description="U10-barytoxin-Tl1a">
    <location>
        <begin position="51"/>
        <end position="98"/>
    </location>
</feature>
<feature type="disulfide bond" evidence="1">
    <location>
        <begin position="57"/>
        <end position="71"/>
    </location>
</feature>
<feature type="disulfide bond" evidence="1">
    <location>
        <begin position="64"/>
        <end position="76"/>
    </location>
</feature>
<feature type="disulfide bond" evidence="1">
    <location>
        <begin position="70"/>
        <end position="89"/>
    </location>
</feature>
<name>ICK3_TRILK</name>
<organism>
    <name type="scientific">Trittame loki</name>
    <name type="common">Brush-footed trapdoor spider</name>
    <dbReference type="NCBI Taxonomy" id="1295018"/>
    <lineage>
        <taxon>Eukaryota</taxon>
        <taxon>Metazoa</taxon>
        <taxon>Ecdysozoa</taxon>
        <taxon>Arthropoda</taxon>
        <taxon>Chelicerata</taxon>
        <taxon>Arachnida</taxon>
        <taxon>Araneae</taxon>
        <taxon>Mygalomorphae</taxon>
        <taxon>Barychelidae</taxon>
        <taxon>Trittame</taxon>
    </lineage>
</organism>
<keyword id="KW-1015">Disulfide bond</keyword>
<keyword id="KW-0872">Ion channel impairing toxin</keyword>
<keyword id="KW-0960">Knottin</keyword>
<keyword id="KW-0964">Secreted</keyword>
<keyword id="KW-0732">Signal</keyword>
<keyword id="KW-0800">Toxin</keyword>
<dbReference type="EMBL" id="GAQE01000006">
    <property type="protein sequence ID" value="JAB84548.1"/>
    <property type="molecule type" value="Transcribed_RNA"/>
</dbReference>
<dbReference type="SMR" id="W4VSI9"/>
<dbReference type="ArachnoServer" id="AS001878">
    <property type="toxin name" value="U10-barytoxin-Tl1a"/>
</dbReference>
<dbReference type="GO" id="GO:0005576">
    <property type="term" value="C:extracellular region"/>
    <property type="evidence" value="ECO:0007669"/>
    <property type="project" value="UniProtKB-SubCell"/>
</dbReference>
<dbReference type="GO" id="GO:0008200">
    <property type="term" value="F:ion channel inhibitor activity"/>
    <property type="evidence" value="ECO:0007669"/>
    <property type="project" value="InterPro"/>
</dbReference>
<dbReference type="GO" id="GO:0090729">
    <property type="term" value="F:toxin activity"/>
    <property type="evidence" value="ECO:0007669"/>
    <property type="project" value="UniProtKB-KW"/>
</dbReference>
<dbReference type="InterPro" id="IPR011696">
    <property type="entry name" value="Huwentoxin-1"/>
</dbReference>
<dbReference type="Pfam" id="PF07740">
    <property type="entry name" value="Toxin_12"/>
    <property type="match status" value="1"/>
</dbReference>
<dbReference type="SUPFAM" id="SSF57059">
    <property type="entry name" value="omega toxin-like"/>
    <property type="match status" value="1"/>
</dbReference>
<evidence type="ECO:0000250" key="1"/>
<evidence type="ECO:0000255" key="2"/>
<evidence type="ECO:0000303" key="3">
    <source>
    </source>
</evidence>
<evidence type="ECO:0000305" key="4"/>